<organism>
    <name type="scientific">Xanthomonas euvesicatoria pv. vesicatoria (strain 85-10)</name>
    <name type="common">Xanthomonas campestris pv. vesicatoria</name>
    <dbReference type="NCBI Taxonomy" id="316273"/>
    <lineage>
        <taxon>Bacteria</taxon>
        <taxon>Pseudomonadati</taxon>
        <taxon>Pseudomonadota</taxon>
        <taxon>Gammaproteobacteria</taxon>
        <taxon>Lysobacterales</taxon>
        <taxon>Lysobacteraceae</taxon>
        <taxon>Xanthomonas</taxon>
    </lineage>
</organism>
<keyword id="KW-0067">ATP-binding</keyword>
<keyword id="KW-0963">Cytoplasm</keyword>
<keyword id="KW-0418">Kinase</keyword>
<keyword id="KW-0547">Nucleotide-binding</keyword>
<keyword id="KW-0808">Transferase</keyword>
<accession>Q3BSN5</accession>
<gene>
    <name evidence="1" type="primary">cmk</name>
    <name type="ordered locus">XCV2497</name>
</gene>
<protein>
    <recommendedName>
        <fullName evidence="1">Cytidylate kinase</fullName>
        <shortName evidence="1">CK</shortName>
        <ecNumber evidence="1">2.7.4.25</ecNumber>
    </recommendedName>
    <alternativeName>
        <fullName evidence="1">Cytidine monophosphate kinase</fullName>
        <shortName evidence="1">CMP kinase</shortName>
    </alternativeName>
</protein>
<name>KCY_XANE5</name>
<proteinExistence type="inferred from homology"/>
<evidence type="ECO:0000255" key="1">
    <source>
        <dbReference type="HAMAP-Rule" id="MF_00238"/>
    </source>
</evidence>
<reference key="1">
    <citation type="journal article" date="2005" name="J. Bacteriol.">
        <title>Insights into genome plasticity and pathogenicity of the plant pathogenic Bacterium Xanthomonas campestris pv. vesicatoria revealed by the complete genome sequence.</title>
        <authorList>
            <person name="Thieme F."/>
            <person name="Koebnik R."/>
            <person name="Bekel T."/>
            <person name="Berger C."/>
            <person name="Boch J."/>
            <person name="Buettner D."/>
            <person name="Caldana C."/>
            <person name="Gaigalat L."/>
            <person name="Goesmann A."/>
            <person name="Kay S."/>
            <person name="Kirchner O."/>
            <person name="Lanz C."/>
            <person name="Linke B."/>
            <person name="McHardy A.C."/>
            <person name="Meyer F."/>
            <person name="Mittenhuber G."/>
            <person name="Nies D.H."/>
            <person name="Niesbach-Kloesgen U."/>
            <person name="Patschkowski T."/>
            <person name="Rueckert C."/>
            <person name="Rupp O."/>
            <person name="Schneiker S."/>
            <person name="Schuster S.C."/>
            <person name="Vorhoelter F.J."/>
            <person name="Weber E."/>
            <person name="Puehler A."/>
            <person name="Bonas U."/>
            <person name="Bartels D."/>
            <person name="Kaiser O."/>
        </authorList>
    </citation>
    <scope>NUCLEOTIDE SEQUENCE [LARGE SCALE GENOMIC DNA]</scope>
    <source>
        <strain>85-10</strain>
    </source>
</reference>
<feature type="chain" id="PRO_1000048312" description="Cytidylate kinase">
    <location>
        <begin position="1"/>
        <end position="227"/>
    </location>
</feature>
<feature type="binding site" evidence="1">
    <location>
        <begin position="12"/>
        <end position="20"/>
    </location>
    <ligand>
        <name>ATP</name>
        <dbReference type="ChEBI" id="CHEBI:30616"/>
    </ligand>
</feature>
<comment type="catalytic activity">
    <reaction evidence="1">
        <text>CMP + ATP = CDP + ADP</text>
        <dbReference type="Rhea" id="RHEA:11600"/>
        <dbReference type="ChEBI" id="CHEBI:30616"/>
        <dbReference type="ChEBI" id="CHEBI:58069"/>
        <dbReference type="ChEBI" id="CHEBI:60377"/>
        <dbReference type="ChEBI" id="CHEBI:456216"/>
        <dbReference type="EC" id="2.7.4.25"/>
    </reaction>
</comment>
<comment type="catalytic activity">
    <reaction evidence="1">
        <text>dCMP + ATP = dCDP + ADP</text>
        <dbReference type="Rhea" id="RHEA:25094"/>
        <dbReference type="ChEBI" id="CHEBI:30616"/>
        <dbReference type="ChEBI" id="CHEBI:57566"/>
        <dbReference type="ChEBI" id="CHEBI:58593"/>
        <dbReference type="ChEBI" id="CHEBI:456216"/>
        <dbReference type="EC" id="2.7.4.25"/>
    </reaction>
</comment>
<comment type="subcellular location">
    <subcellularLocation>
        <location evidence="1">Cytoplasm</location>
    </subcellularLocation>
</comment>
<comment type="similarity">
    <text evidence="1">Belongs to the cytidylate kinase family. Type 1 subfamily.</text>
</comment>
<sequence length="227" mass="24198">MTDLSPVLTIDGPSGAGKGTVSRIVAARLGWHYLDSGALYRAVGVAASWADLDVSDPAALVRCTFDTRVEFDDAGEAGLRVLVNGADATSELRLETTGALASAIAAIPEVRSALKERQRAFRRAPGLVADGRDMGTVIFPDAAYKVFLTASAEERAGRRHKQLMEKGVSVIFDDLLREIMARDARDAQRVVAPLRPAEDAVLIDTSGMGIEDVVQRVVGLLADRAPL</sequence>
<dbReference type="EC" id="2.7.4.25" evidence="1"/>
<dbReference type="EMBL" id="AM039952">
    <property type="protein sequence ID" value="CAJ24174.1"/>
    <property type="molecule type" value="Genomic_DNA"/>
</dbReference>
<dbReference type="RefSeq" id="WP_011347665.1">
    <property type="nucleotide sequence ID" value="NZ_CP017190.1"/>
</dbReference>
<dbReference type="SMR" id="Q3BSN5"/>
<dbReference type="STRING" id="456327.BJD11_10415"/>
<dbReference type="KEGG" id="xcv:XCV2497"/>
<dbReference type="eggNOG" id="COG0283">
    <property type="taxonomic scope" value="Bacteria"/>
</dbReference>
<dbReference type="HOGENOM" id="CLU_079959_2_0_6"/>
<dbReference type="Proteomes" id="UP000007069">
    <property type="component" value="Chromosome"/>
</dbReference>
<dbReference type="GO" id="GO:0005737">
    <property type="term" value="C:cytoplasm"/>
    <property type="evidence" value="ECO:0007669"/>
    <property type="project" value="UniProtKB-SubCell"/>
</dbReference>
<dbReference type="GO" id="GO:0005524">
    <property type="term" value="F:ATP binding"/>
    <property type="evidence" value="ECO:0007669"/>
    <property type="project" value="UniProtKB-UniRule"/>
</dbReference>
<dbReference type="GO" id="GO:0036430">
    <property type="term" value="F:CMP kinase activity"/>
    <property type="evidence" value="ECO:0007669"/>
    <property type="project" value="RHEA"/>
</dbReference>
<dbReference type="GO" id="GO:0036431">
    <property type="term" value="F:dCMP kinase activity"/>
    <property type="evidence" value="ECO:0007669"/>
    <property type="project" value="RHEA"/>
</dbReference>
<dbReference type="GO" id="GO:0006220">
    <property type="term" value="P:pyrimidine nucleotide metabolic process"/>
    <property type="evidence" value="ECO:0007669"/>
    <property type="project" value="UniProtKB-UniRule"/>
</dbReference>
<dbReference type="CDD" id="cd02020">
    <property type="entry name" value="CMPK"/>
    <property type="match status" value="1"/>
</dbReference>
<dbReference type="FunFam" id="3.40.50.300:FF:000262">
    <property type="entry name" value="Cytidylate kinase"/>
    <property type="match status" value="1"/>
</dbReference>
<dbReference type="Gene3D" id="3.40.50.300">
    <property type="entry name" value="P-loop containing nucleotide triphosphate hydrolases"/>
    <property type="match status" value="1"/>
</dbReference>
<dbReference type="HAMAP" id="MF_00238">
    <property type="entry name" value="Cytidyl_kinase_type1"/>
    <property type="match status" value="1"/>
</dbReference>
<dbReference type="InterPro" id="IPR003136">
    <property type="entry name" value="Cytidylate_kin"/>
</dbReference>
<dbReference type="InterPro" id="IPR011994">
    <property type="entry name" value="Cytidylate_kinase_dom"/>
</dbReference>
<dbReference type="InterPro" id="IPR027417">
    <property type="entry name" value="P-loop_NTPase"/>
</dbReference>
<dbReference type="NCBIfam" id="TIGR00017">
    <property type="entry name" value="cmk"/>
    <property type="match status" value="1"/>
</dbReference>
<dbReference type="Pfam" id="PF02224">
    <property type="entry name" value="Cytidylate_kin"/>
    <property type="match status" value="1"/>
</dbReference>
<dbReference type="SUPFAM" id="SSF52540">
    <property type="entry name" value="P-loop containing nucleoside triphosphate hydrolases"/>
    <property type="match status" value="1"/>
</dbReference>